<gene>
    <name evidence="1" type="primary">sepF</name>
    <name type="ordered locus">spr1508</name>
</gene>
<protein>
    <recommendedName>
        <fullName evidence="1">Cell division protein SepF</fullName>
    </recommendedName>
</protein>
<reference key="1">
    <citation type="journal article" date="2001" name="J. Bacteriol.">
        <title>Genome of the bacterium Streptococcus pneumoniae strain R6.</title>
        <authorList>
            <person name="Hoskins J."/>
            <person name="Alborn W.E. Jr."/>
            <person name="Arnold J."/>
            <person name="Blaszczak L.C."/>
            <person name="Burgett S."/>
            <person name="DeHoff B.S."/>
            <person name="Estrem S.T."/>
            <person name="Fritz L."/>
            <person name="Fu D.-J."/>
            <person name="Fuller W."/>
            <person name="Geringer C."/>
            <person name="Gilmour R."/>
            <person name="Glass J.S."/>
            <person name="Khoja H."/>
            <person name="Kraft A.R."/>
            <person name="Lagace R.E."/>
            <person name="LeBlanc D.J."/>
            <person name="Lee L.N."/>
            <person name="Lefkowitz E.J."/>
            <person name="Lu J."/>
            <person name="Matsushima P."/>
            <person name="McAhren S.M."/>
            <person name="McHenney M."/>
            <person name="McLeaster K."/>
            <person name="Mundy C.W."/>
            <person name="Nicas T.I."/>
            <person name="Norris F.H."/>
            <person name="O'Gara M."/>
            <person name="Peery R.B."/>
            <person name="Robertson G.T."/>
            <person name="Rockey P."/>
            <person name="Sun P.-M."/>
            <person name="Winkler M.E."/>
            <person name="Yang Y."/>
            <person name="Young-Bellido M."/>
            <person name="Zhao G."/>
            <person name="Zook C.A."/>
            <person name="Baltz R.H."/>
            <person name="Jaskunas S.R."/>
            <person name="Rosteck P.R. Jr."/>
            <person name="Skatrud P.L."/>
            <person name="Glass J.I."/>
        </authorList>
    </citation>
    <scope>NUCLEOTIDE SEQUENCE [LARGE SCALE GENOMIC DNA]</scope>
    <source>
        <strain>ATCC BAA-255 / R6</strain>
    </source>
</reference>
<sequence length="179" mass="20637">MSLKDRFDRFIDYFTEDEDSSLPYEKRDEPVFTPVNSSQEPALPMNQPSQSAGTKENNITRLHARQQELANQSQRATDKVIIDVRYPRKYEDATEIVDLLAGNESILIDFQYMTEVQARRCLDYLDGACHVLAGNLKKVASTMYLLTPVNVIVNVEDIRLPDEDQQGEFGFDMKRNRVR</sequence>
<dbReference type="EMBL" id="AE007317">
    <property type="protein sequence ID" value="AAL00312.1"/>
    <property type="molecule type" value="Genomic_DNA"/>
</dbReference>
<dbReference type="PIR" id="C98060">
    <property type="entry name" value="C98060"/>
</dbReference>
<dbReference type="RefSeq" id="NP_359101.1">
    <property type="nucleotide sequence ID" value="NC_003098.1"/>
</dbReference>
<dbReference type="RefSeq" id="WP_000053385.1">
    <property type="nucleotide sequence ID" value="NC_003098.1"/>
</dbReference>
<dbReference type="SMR" id="Q8DNW1"/>
<dbReference type="STRING" id="171101.spr1508"/>
<dbReference type="KEGG" id="spr:spr1508"/>
<dbReference type="PATRIC" id="fig|171101.6.peg.1628"/>
<dbReference type="eggNOG" id="COG1799">
    <property type="taxonomic scope" value="Bacteria"/>
</dbReference>
<dbReference type="HOGENOM" id="CLU_078499_2_0_9"/>
<dbReference type="Proteomes" id="UP000000586">
    <property type="component" value="Chromosome"/>
</dbReference>
<dbReference type="GO" id="GO:0005737">
    <property type="term" value="C:cytoplasm"/>
    <property type="evidence" value="ECO:0007669"/>
    <property type="project" value="UniProtKB-SubCell"/>
</dbReference>
<dbReference type="GO" id="GO:0000917">
    <property type="term" value="P:division septum assembly"/>
    <property type="evidence" value="ECO:0007669"/>
    <property type="project" value="UniProtKB-KW"/>
</dbReference>
<dbReference type="GO" id="GO:0043093">
    <property type="term" value="P:FtsZ-dependent cytokinesis"/>
    <property type="evidence" value="ECO:0007669"/>
    <property type="project" value="UniProtKB-UniRule"/>
</dbReference>
<dbReference type="Gene3D" id="3.30.110.150">
    <property type="entry name" value="SepF-like protein"/>
    <property type="match status" value="1"/>
</dbReference>
<dbReference type="HAMAP" id="MF_01197">
    <property type="entry name" value="SepF"/>
    <property type="match status" value="1"/>
</dbReference>
<dbReference type="InterPro" id="IPR023052">
    <property type="entry name" value="Cell_div_SepF"/>
</dbReference>
<dbReference type="InterPro" id="IPR007561">
    <property type="entry name" value="Cell_div_SepF/SepF-rel"/>
</dbReference>
<dbReference type="InterPro" id="IPR038594">
    <property type="entry name" value="SepF-like_sf"/>
</dbReference>
<dbReference type="PANTHER" id="PTHR35798">
    <property type="entry name" value="CELL DIVISION PROTEIN SEPF"/>
    <property type="match status" value="1"/>
</dbReference>
<dbReference type="PANTHER" id="PTHR35798:SF1">
    <property type="entry name" value="CELL DIVISION PROTEIN SEPF"/>
    <property type="match status" value="1"/>
</dbReference>
<dbReference type="Pfam" id="PF04472">
    <property type="entry name" value="SepF"/>
    <property type="match status" value="1"/>
</dbReference>
<accession>Q8DNW1</accession>
<name>SEPF_STRR6</name>
<feature type="chain" id="PRO_0000334097" description="Cell division protein SepF">
    <location>
        <begin position="1"/>
        <end position="179"/>
    </location>
</feature>
<feature type="region of interest" description="Disordered" evidence="2">
    <location>
        <begin position="18"/>
        <end position="55"/>
    </location>
</feature>
<feature type="compositionally biased region" description="Polar residues" evidence="2">
    <location>
        <begin position="34"/>
        <end position="55"/>
    </location>
</feature>
<comment type="function">
    <text evidence="1">Cell division protein that is part of the divisome complex and is recruited early to the Z-ring. Probably stimulates Z-ring formation, perhaps through the cross-linking of FtsZ protofilaments. Its function overlaps with FtsA.</text>
</comment>
<comment type="subunit">
    <text evidence="1">Homodimer. Interacts with FtsZ.</text>
</comment>
<comment type="subcellular location">
    <subcellularLocation>
        <location evidence="1">Cytoplasm</location>
    </subcellularLocation>
    <text evidence="1">Localizes to the division site, in a FtsZ-dependent manner.</text>
</comment>
<comment type="similarity">
    <text evidence="1">Belongs to the SepF family.</text>
</comment>
<proteinExistence type="inferred from homology"/>
<organism>
    <name type="scientific">Streptococcus pneumoniae (strain ATCC BAA-255 / R6)</name>
    <dbReference type="NCBI Taxonomy" id="171101"/>
    <lineage>
        <taxon>Bacteria</taxon>
        <taxon>Bacillati</taxon>
        <taxon>Bacillota</taxon>
        <taxon>Bacilli</taxon>
        <taxon>Lactobacillales</taxon>
        <taxon>Streptococcaceae</taxon>
        <taxon>Streptococcus</taxon>
    </lineage>
</organism>
<keyword id="KW-0131">Cell cycle</keyword>
<keyword id="KW-0132">Cell division</keyword>
<keyword id="KW-0963">Cytoplasm</keyword>
<keyword id="KW-1185">Reference proteome</keyword>
<keyword id="KW-0717">Septation</keyword>
<evidence type="ECO:0000255" key="1">
    <source>
        <dbReference type="HAMAP-Rule" id="MF_01197"/>
    </source>
</evidence>
<evidence type="ECO:0000256" key="2">
    <source>
        <dbReference type="SAM" id="MobiDB-lite"/>
    </source>
</evidence>